<evidence type="ECO:0000250" key="1">
    <source>
        <dbReference type="UniProtKB" id="P10311"/>
    </source>
</evidence>
<evidence type="ECO:0000255" key="2"/>
<evidence type="ECO:0000255" key="3">
    <source>
        <dbReference type="PROSITE-ProRule" id="PRU01072"/>
    </source>
</evidence>
<evidence type="ECO:0000305" key="4"/>
<keyword id="KW-0229">DNA integration</keyword>
<keyword id="KW-0230">DNA invertase</keyword>
<keyword id="KW-0233">DNA recombination</keyword>
<keyword id="KW-0238">DNA-binding</keyword>
<keyword id="KW-1264">Viral receptor tropism switching</keyword>
<keyword id="KW-1160">Virus entry into host cell</keyword>
<protein>
    <recommendedName>
        <fullName>DNA-invertase</fullName>
    </recommendedName>
    <alternativeName>
        <fullName>Site-specific recombinase</fullName>
    </alternativeName>
</protein>
<comment type="function">
    <text evidence="1">Performs inversion of a viral 3 kp segment (C-segment) that encodes two alternate pairs of tail fiber proteins thereby modifying the host specificity of the virus.</text>
</comment>
<comment type="similarity">
    <text evidence="4">Belongs to the site-specific recombinase resolvase family.</text>
</comment>
<proteinExistence type="inferred from homology"/>
<reference key="1">
    <citation type="journal article" date="1988" name="Nucleic Acids Res.">
        <title>DNA sequence of the site-specific recombination function cin of phage P7.</title>
        <authorList>
            <person name="Ritthaler W."/>
            <person name="Kamp D."/>
        </authorList>
    </citation>
    <scope>NUCLEOTIDE SEQUENCE [GENOMIC DNA]</scope>
</reference>
<feature type="chain" id="PRO_0000196357" description="DNA-invertase">
    <location>
        <begin position="1"/>
        <end position="186"/>
    </location>
</feature>
<feature type="domain" description="Resolvase/invertase-type recombinase catalytic" evidence="3">
    <location>
        <begin position="1"/>
        <end position="134"/>
    </location>
</feature>
<feature type="DNA-binding region" description="H-T-H motif" evidence="2">
    <location>
        <begin position="161"/>
        <end position="180"/>
    </location>
</feature>
<feature type="active site" description="O-(5'-phospho-DNA)-serine intermediate" evidence="3">
    <location>
        <position position="9"/>
    </location>
</feature>
<gene>
    <name type="primary">cin</name>
</gene>
<organism>
    <name type="scientific">Enterobacteria phage P7</name>
    <name type="common">Bacteriophage P7</name>
    <dbReference type="NCBI Taxonomy" id="10682"/>
    <lineage>
        <taxon>Viruses</taxon>
        <taxon>Duplodnaviria</taxon>
        <taxon>Heunggongvirae</taxon>
        <taxon>Uroviricota</taxon>
        <taxon>Caudoviricetes</taxon>
        <taxon>Punavirus</taxon>
        <taxon>Punavirus P1</taxon>
    </lineage>
</organism>
<dbReference type="EMBL" id="X07724">
    <property type="protein sequence ID" value="CAA30554.1"/>
    <property type="molecule type" value="Genomic_DNA"/>
</dbReference>
<dbReference type="PIR" id="S03663">
    <property type="entry name" value="JWBPP7"/>
</dbReference>
<dbReference type="RefSeq" id="YP_009914506.1">
    <property type="nucleotide sequence ID" value="NC_050152.1"/>
</dbReference>
<dbReference type="SMR" id="P21703"/>
<dbReference type="GeneID" id="58571809"/>
<dbReference type="GO" id="GO:0003677">
    <property type="term" value="F:DNA binding"/>
    <property type="evidence" value="ECO:0007669"/>
    <property type="project" value="UniProtKB-KW"/>
</dbReference>
<dbReference type="GO" id="GO:0000150">
    <property type="term" value="F:DNA strand exchange activity"/>
    <property type="evidence" value="ECO:0007669"/>
    <property type="project" value="UniProtKB-KW"/>
</dbReference>
<dbReference type="GO" id="GO:0015074">
    <property type="term" value="P:DNA integration"/>
    <property type="evidence" value="ECO:0007669"/>
    <property type="project" value="UniProtKB-KW"/>
</dbReference>
<dbReference type="GO" id="GO:0046718">
    <property type="term" value="P:symbiont entry into host cell"/>
    <property type="evidence" value="ECO:0007669"/>
    <property type="project" value="UniProtKB-KW"/>
</dbReference>
<dbReference type="GO" id="GO:0098678">
    <property type="term" value="P:viral tropism switching"/>
    <property type="evidence" value="ECO:0007669"/>
    <property type="project" value="UniProtKB-KW"/>
</dbReference>
<dbReference type="CDD" id="cd03768">
    <property type="entry name" value="SR_ResInv"/>
    <property type="match status" value="1"/>
</dbReference>
<dbReference type="FunFam" id="3.40.50.1390:FF:000001">
    <property type="entry name" value="DNA recombinase"/>
    <property type="match status" value="1"/>
</dbReference>
<dbReference type="Gene3D" id="1.10.10.60">
    <property type="entry name" value="Homeodomain-like"/>
    <property type="match status" value="1"/>
</dbReference>
<dbReference type="Gene3D" id="3.40.50.1390">
    <property type="entry name" value="Resolvase, N-terminal catalytic domain"/>
    <property type="match status" value="1"/>
</dbReference>
<dbReference type="InterPro" id="IPR009057">
    <property type="entry name" value="Homeodomain-like_sf"/>
</dbReference>
<dbReference type="InterPro" id="IPR006118">
    <property type="entry name" value="Recombinase_CS"/>
</dbReference>
<dbReference type="InterPro" id="IPR006119">
    <property type="entry name" value="Resolv_N"/>
</dbReference>
<dbReference type="InterPro" id="IPR036162">
    <property type="entry name" value="Resolvase-like_N_sf"/>
</dbReference>
<dbReference type="InterPro" id="IPR006120">
    <property type="entry name" value="Resolvase_HTH_dom"/>
</dbReference>
<dbReference type="InterPro" id="IPR050639">
    <property type="entry name" value="SSR_resolvase"/>
</dbReference>
<dbReference type="PANTHER" id="PTHR30461">
    <property type="entry name" value="DNA-INVERTASE FROM LAMBDOID PROPHAGE"/>
    <property type="match status" value="1"/>
</dbReference>
<dbReference type="PANTHER" id="PTHR30461:SF2">
    <property type="entry name" value="SERINE RECOMBINASE PINE-RELATED"/>
    <property type="match status" value="1"/>
</dbReference>
<dbReference type="Pfam" id="PF02796">
    <property type="entry name" value="HTH_7"/>
    <property type="match status" value="1"/>
</dbReference>
<dbReference type="Pfam" id="PF00239">
    <property type="entry name" value="Resolvase"/>
    <property type="match status" value="1"/>
</dbReference>
<dbReference type="SMART" id="SM00857">
    <property type="entry name" value="Resolvase"/>
    <property type="match status" value="1"/>
</dbReference>
<dbReference type="SUPFAM" id="SSF46689">
    <property type="entry name" value="Homeodomain-like"/>
    <property type="match status" value="1"/>
</dbReference>
<dbReference type="SUPFAM" id="SSF53041">
    <property type="entry name" value="Resolvase-like"/>
    <property type="match status" value="1"/>
</dbReference>
<dbReference type="PROSITE" id="PS00397">
    <property type="entry name" value="RECOMBINASES_1"/>
    <property type="match status" value="1"/>
</dbReference>
<dbReference type="PROSITE" id="PS00398">
    <property type="entry name" value="RECOMBINASES_2"/>
    <property type="match status" value="1"/>
</dbReference>
<dbReference type="PROSITE" id="PS51736">
    <property type="entry name" value="RECOMBINASES_3"/>
    <property type="match status" value="1"/>
</dbReference>
<sequence>MLIGYVRVSTNEQNTALQRNALESAGCELIFEDKASGKQTERPGLKKVLRMLSRGDTLVVWKLDRLGRSMRHLVVLVEELRDRGINFRSLTDSIDTSTPMGRFFFHVMGALAEMERELIVERTRAGLDAARAEGRIGGRRPKYQEETWQQMRRLLENGIPRKQVAIIYDVAVSTLYKKFPASSFQS</sequence>
<accession>P21703</accession>
<organismHost>
    <name type="scientific">Escherichia coli</name>
    <dbReference type="NCBI Taxonomy" id="562"/>
</organismHost>
<name>CIN_BPP7</name>